<gene>
    <name evidence="1" type="primary">ung</name>
    <name type="ordered locus">BC_5398</name>
</gene>
<reference key="1">
    <citation type="journal article" date="2003" name="Nature">
        <title>Genome sequence of Bacillus cereus and comparative analysis with Bacillus anthracis.</title>
        <authorList>
            <person name="Ivanova N."/>
            <person name="Sorokin A."/>
            <person name="Anderson I."/>
            <person name="Galleron N."/>
            <person name="Candelon B."/>
            <person name="Kapatral V."/>
            <person name="Bhattacharyya A."/>
            <person name="Reznik G."/>
            <person name="Mikhailova N."/>
            <person name="Lapidus A."/>
            <person name="Chu L."/>
            <person name="Mazur M."/>
            <person name="Goltsman E."/>
            <person name="Larsen N."/>
            <person name="D'Souza M."/>
            <person name="Walunas T."/>
            <person name="Grechkin Y."/>
            <person name="Pusch G."/>
            <person name="Haselkorn R."/>
            <person name="Fonstein M."/>
            <person name="Ehrlich S.D."/>
            <person name="Overbeek R."/>
            <person name="Kyrpides N.C."/>
        </authorList>
    </citation>
    <scope>NUCLEOTIDE SEQUENCE [LARGE SCALE GENOMIC DNA]</scope>
    <source>
        <strain>ATCC 14579 / DSM 31 / CCUG 7414 / JCM 2152 / NBRC 15305 / NCIMB 9373 / NCTC 2599 / NRRL B-3711</strain>
    </source>
</reference>
<proteinExistence type="inferred from homology"/>
<feature type="chain" id="PRO_0000176058" description="Uracil-DNA glycosylase">
    <location>
        <begin position="1"/>
        <end position="225"/>
    </location>
</feature>
<feature type="active site" description="Proton acceptor" evidence="1">
    <location>
        <position position="65"/>
    </location>
</feature>
<comment type="function">
    <text evidence="1">Excises uracil residues from the DNA which can arise as a result of misincorporation of dUMP residues by DNA polymerase or due to deamination of cytosine.</text>
</comment>
<comment type="catalytic activity">
    <reaction evidence="1">
        <text>Hydrolyzes single-stranded DNA or mismatched double-stranded DNA and polynucleotides, releasing free uracil.</text>
        <dbReference type="EC" id="3.2.2.27"/>
    </reaction>
</comment>
<comment type="subcellular location">
    <subcellularLocation>
        <location evidence="1">Cytoplasm</location>
    </subcellularLocation>
</comment>
<comment type="similarity">
    <text evidence="1">Belongs to the uracil-DNA glycosylase (UDG) superfamily. UNG family.</text>
</comment>
<sequence length="225" mass="25951">MENVLKNDWEPLLAPEFEKEYYLTLSSFLTEEYSTHVVYPKVEDIFNALQYTSYENTKVVILGQDPYHGPNQAHGLSFSVQPGVKTPPSLLNMYKELRDEYGYEIPNNGYLVKWAEQGVLLLNTVLTVRQGEANSHKGKGWEHFTDRVIELLNEREKPVIFILWGRHAQAKKKLITNPNHHIIESVHPSPLSARRGFFGSKPYSKINTILANMGEREIDWEIPNL</sequence>
<keyword id="KW-0963">Cytoplasm</keyword>
<keyword id="KW-0227">DNA damage</keyword>
<keyword id="KW-0234">DNA repair</keyword>
<keyword id="KW-0378">Hydrolase</keyword>
<keyword id="KW-1185">Reference proteome</keyword>
<organism>
    <name type="scientific">Bacillus cereus (strain ATCC 14579 / DSM 31 / CCUG 7414 / JCM 2152 / NBRC 15305 / NCIMB 9373 / NCTC 2599 / NRRL B-3711)</name>
    <dbReference type="NCBI Taxonomy" id="226900"/>
    <lineage>
        <taxon>Bacteria</taxon>
        <taxon>Bacillati</taxon>
        <taxon>Bacillota</taxon>
        <taxon>Bacilli</taxon>
        <taxon>Bacillales</taxon>
        <taxon>Bacillaceae</taxon>
        <taxon>Bacillus</taxon>
        <taxon>Bacillus cereus group</taxon>
    </lineage>
</organism>
<dbReference type="EC" id="3.2.2.27" evidence="1"/>
<dbReference type="EMBL" id="AE016877">
    <property type="protein sequence ID" value="AAP12260.1"/>
    <property type="molecule type" value="Genomic_DNA"/>
</dbReference>
<dbReference type="RefSeq" id="NP_835059.1">
    <property type="nucleotide sequence ID" value="NC_004722.1"/>
</dbReference>
<dbReference type="RefSeq" id="WP_000432519.1">
    <property type="nucleotide sequence ID" value="NZ_CP138336.1"/>
</dbReference>
<dbReference type="SMR" id="Q814M9"/>
<dbReference type="STRING" id="226900.BC_5398"/>
<dbReference type="KEGG" id="bce:BC5398"/>
<dbReference type="PATRIC" id="fig|226900.8.peg.5576"/>
<dbReference type="HOGENOM" id="CLU_032162_3_0_9"/>
<dbReference type="OrthoDB" id="9804372at2"/>
<dbReference type="Proteomes" id="UP000001417">
    <property type="component" value="Chromosome"/>
</dbReference>
<dbReference type="GO" id="GO:0005737">
    <property type="term" value="C:cytoplasm"/>
    <property type="evidence" value="ECO:0007669"/>
    <property type="project" value="UniProtKB-SubCell"/>
</dbReference>
<dbReference type="GO" id="GO:0004844">
    <property type="term" value="F:uracil DNA N-glycosylase activity"/>
    <property type="evidence" value="ECO:0007669"/>
    <property type="project" value="UniProtKB-UniRule"/>
</dbReference>
<dbReference type="GO" id="GO:0097510">
    <property type="term" value="P:base-excision repair, AP site formation via deaminated base removal"/>
    <property type="evidence" value="ECO:0000318"/>
    <property type="project" value="GO_Central"/>
</dbReference>
<dbReference type="CDD" id="cd10027">
    <property type="entry name" value="UDG-F1-like"/>
    <property type="match status" value="1"/>
</dbReference>
<dbReference type="FunFam" id="3.40.470.10:FF:000001">
    <property type="entry name" value="Uracil-DNA glycosylase"/>
    <property type="match status" value="1"/>
</dbReference>
<dbReference type="Gene3D" id="3.40.470.10">
    <property type="entry name" value="Uracil-DNA glycosylase-like domain"/>
    <property type="match status" value="1"/>
</dbReference>
<dbReference type="HAMAP" id="MF_00148">
    <property type="entry name" value="UDG"/>
    <property type="match status" value="1"/>
</dbReference>
<dbReference type="InterPro" id="IPR002043">
    <property type="entry name" value="UDG_fam1"/>
</dbReference>
<dbReference type="InterPro" id="IPR018085">
    <property type="entry name" value="Ura-DNA_Glyclase_AS"/>
</dbReference>
<dbReference type="InterPro" id="IPR005122">
    <property type="entry name" value="Uracil-DNA_glycosylase-like"/>
</dbReference>
<dbReference type="InterPro" id="IPR036895">
    <property type="entry name" value="Uracil-DNA_glycosylase-like_sf"/>
</dbReference>
<dbReference type="NCBIfam" id="NF003588">
    <property type="entry name" value="PRK05254.1-1"/>
    <property type="match status" value="1"/>
</dbReference>
<dbReference type="NCBIfam" id="NF003589">
    <property type="entry name" value="PRK05254.1-2"/>
    <property type="match status" value="1"/>
</dbReference>
<dbReference type="NCBIfam" id="NF003591">
    <property type="entry name" value="PRK05254.1-4"/>
    <property type="match status" value="1"/>
</dbReference>
<dbReference type="NCBIfam" id="NF003592">
    <property type="entry name" value="PRK05254.1-5"/>
    <property type="match status" value="1"/>
</dbReference>
<dbReference type="NCBIfam" id="TIGR00628">
    <property type="entry name" value="ung"/>
    <property type="match status" value="1"/>
</dbReference>
<dbReference type="PANTHER" id="PTHR11264">
    <property type="entry name" value="URACIL-DNA GLYCOSYLASE"/>
    <property type="match status" value="1"/>
</dbReference>
<dbReference type="PANTHER" id="PTHR11264:SF0">
    <property type="entry name" value="URACIL-DNA GLYCOSYLASE"/>
    <property type="match status" value="1"/>
</dbReference>
<dbReference type="Pfam" id="PF03167">
    <property type="entry name" value="UDG"/>
    <property type="match status" value="1"/>
</dbReference>
<dbReference type="SMART" id="SM00986">
    <property type="entry name" value="UDG"/>
    <property type="match status" value="1"/>
</dbReference>
<dbReference type="SMART" id="SM00987">
    <property type="entry name" value="UreE_C"/>
    <property type="match status" value="1"/>
</dbReference>
<dbReference type="SUPFAM" id="SSF52141">
    <property type="entry name" value="Uracil-DNA glycosylase-like"/>
    <property type="match status" value="1"/>
</dbReference>
<dbReference type="PROSITE" id="PS00130">
    <property type="entry name" value="U_DNA_GLYCOSYLASE"/>
    <property type="match status" value="1"/>
</dbReference>
<protein>
    <recommendedName>
        <fullName evidence="1">Uracil-DNA glycosylase</fullName>
        <shortName evidence="1">UDG</shortName>
        <ecNumber evidence="1">3.2.2.27</ecNumber>
    </recommendedName>
</protein>
<accession>Q814M9</accession>
<evidence type="ECO:0000255" key="1">
    <source>
        <dbReference type="HAMAP-Rule" id="MF_00148"/>
    </source>
</evidence>
<name>UNG_BACCR</name>